<reference key="1">
    <citation type="journal article" date="2006" name="Nat. Biotechnol.">
        <title>Complete genome of the mutualistic, N2-fixing grass endophyte Azoarcus sp. strain BH72.</title>
        <authorList>
            <person name="Krause A."/>
            <person name="Ramakumar A."/>
            <person name="Bartels D."/>
            <person name="Battistoni F."/>
            <person name="Bekel T."/>
            <person name="Boch J."/>
            <person name="Boehm M."/>
            <person name="Friedrich F."/>
            <person name="Hurek T."/>
            <person name="Krause L."/>
            <person name="Linke B."/>
            <person name="McHardy A.C."/>
            <person name="Sarkar A."/>
            <person name="Schneiker S."/>
            <person name="Syed A.A."/>
            <person name="Thauer R."/>
            <person name="Vorhoelter F.-J."/>
            <person name="Weidner S."/>
            <person name="Puehler A."/>
            <person name="Reinhold-Hurek B."/>
            <person name="Kaiser O."/>
            <person name="Goesmann A."/>
        </authorList>
    </citation>
    <scope>NUCLEOTIDE SEQUENCE [LARGE SCALE GENOMIC DNA]</scope>
    <source>
        <strain>BH72</strain>
    </source>
</reference>
<organism>
    <name type="scientific">Azoarcus sp. (strain BH72)</name>
    <dbReference type="NCBI Taxonomy" id="418699"/>
    <lineage>
        <taxon>Bacteria</taxon>
        <taxon>Pseudomonadati</taxon>
        <taxon>Pseudomonadota</taxon>
        <taxon>Betaproteobacteria</taxon>
        <taxon>Rhodocyclales</taxon>
        <taxon>Zoogloeaceae</taxon>
        <taxon>Azoarcus</taxon>
    </lineage>
</organism>
<dbReference type="EMBL" id="AM406670">
    <property type="protein sequence ID" value="CAL93679.1"/>
    <property type="molecule type" value="Genomic_DNA"/>
</dbReference>
<dbReference type="RefSeq" id="WP_011764796.1">
    <property type="nucleotide sequence ID" value="NC_008702.1"/>
</dbReference>
<dbReference type="SMR" id="A1K4C4"/>
<dbReference type="STRING" id="62928.azo1062"/>
<dbReference type="KEGG" id="azo:azo1062"/>
<dbReference type="eggNOG" id="COG0484">
    <property type="taxonomic scope" value="Bacteria"/>
</dbReference>
<dbReference type="HOGENOM" id="CLU_017633_0_7_4"/>
<dbReference type="Proteomes" id="UP000002588">
    <property type="component" value="Chromosome"/>
</dbReference>
<dbReference type="GO" id="GO:0005737">
    <property type="term" value="C:cytoplasm"/>
    <property type="evidence" value="ECO:0007669"/>
    <property type="project" value="UniProtKB-SubCell"/>
</dbReference>
<dbReference type="GO" id="GO:0005524">
    <property type="term" value="F:ATP binding"/>
    <property type="evidence" value="ECO:0007669"/>
    <property type="project" value="InterPro"/>
</dbReference>
<dbReference type="GO" id="GO:0031072">
    <property type="term" value="F:heat shock protein binding"/>
    <property type="evidence" value="ECO:0007669"/>
    <property type="project" value="InterPro"/>
</dbReference>
<dbReference type="GO" id="GO:0051082">
    <property type="term" value="F:unfolded protein binding"/>
    <property type="evidence" value="ECO:0007669"/>
    <property type="project" value="UniProtKB-UniRule"/>
</dbReference>
<dbReference type="GO" id="GO:0008270">
    <property type="term" value="F:zinc ion binding"/>
    <property type="evidence" value="ECO:0007669"/>
    <property type="project" value="UniProtKB-UniRule"/>
</dbReference>
<dbReference type="GO" id="GO:0051085">
    <property type="term" value="P:chaperone cofactor-dependent protein refolding"/>
    <property type="evidence" value="ECO:0007669"/>
    <property type="project" value="TreeGrafter"/>
</dbReference>
<dbReference type="GO" id="GO:0006260">
    <property type="term" value="P:DNA replication"/>
    <property type="evidence" value="ECO:0007669"/>
    <property type="project" value="UniProtKB-KW"/>
</dbReference>
<dbReference type="GO" id="GO:0042026">
    <property type="term" value="P:protein refolding"/>
    <property type="evidence" value="ECO:0007669"/>
    <property type="project" value="TreeGrafter"/>
</dbReference>
<dbReference type="GO" id="GO:0009408">
    <property type="term" value="P:response to heat"/>
    <property type="evidence" value="ECO:0007669"/>
    <property type="project" value="InterPro"/>
</dbReference>
<dbReference type="CDD" id="cd06257">
    <property type="entry name" value="DnaJ"/>
    <property type="match status" value="1"/>
</dbReference>
<dbReference type="CDD" id="cd10747">
    <property type="entry name" value="DnaJ_C"/>
    <property type="match status" value="1"/>
</dbReference>
<dbReference type="CDD" id="cd10719">
    <property type="entry name" value="DnaJ_zf"/>
    <property type="match status" value="1"/>
</dbReference>
<dbReference type="FunFam" id="1.10.287.110:FF:000034">
    <property type="entry name" value="Chaperone protein DnaJ"/>
    <property type="match status" value="1"/>
</dbReference>
<dbReference type="FunFam" id="2.10.230.10:FF:000002">
    <property type="entry name" value="Molecular chaperone DnaJ"/>
    <property type="match status" value="1"/>
</dbReference>
<dbReference type="FunFam" id="2.60.260.20:FF:000004">
    <property type="entry name" value="Molecular chaperone DnaJ"/>
    <property type="match status" value="1"/>
</dbReference>
<dbReference type="Gene3D" id="1.10.287.110">
    <property type="entry name" value="DnaJ domain"/>
    <property type="match status" value="1"/>
</dbReference>
<dbReference type="Gene3D" id="2.10.230.10">
    <property type="entry name" value="Heat shock protein DnaJ, cysteine-rich domain"/>
    <property type="match status" value="1"/>
</dbReference>
<dbReference type="Gene3D" id="2.60.260.20">
    <property type="entry name" value="Urease metallochaperone UreE, N-terminal domain"/>
    <property type="match status" value="2"/>
</dbReference>
<dbReference type="HAMAP" id="MF_01152">
    <property type="entry name" value="DnaJ"/>
    <property type="match status" value="1"/>
</dbReference>
<dbReference type="InterPro" id="IPR012724">
    <property type="entry name" value="DnaJ"/>
</dbReference>
<dbReference type="InterPro" id="IPR002939">
    <property type="entry name" value="DnaJ_C"/>
</dbReference>
<dbReference type="InterPro" id="IPR001623">
    <property type="entry name" value="DnaJ_domain"/>
</dbReference>
<dbReference type="InterPro" id="IPR018253">
    <property type="entry name" value="DnaJ_domain_CS"/>
</dbReference>
<dbReference type="InterPro" id="IPR008971">
    <property type="entry name" value="HSP40/DnaJ_pept-bd"/>
</dbReference>
<dbReference type="InterPro" id="IPR001305">
    <property type="entry name" value="HSP_DnaJ_Cys-rich_dom"/>
</dbReference>
<dbReference type="InterPro" id="IPR036410">
    <property type="entry name" value="HSP_DnaJ_Cys-rich_dom_sf"/>
</dbReference>
<dbReference type="InterPro" id="IPR036869">
    <property type="entry name" value="J_dom_sf"/>
</dbReference>
<dbReference type="NCBIfam" id="TIGR02349">
    <property type="entry name" value="DnaJ_bact"/>
    <property type="match status" value="1"/>
</dbReference>
<dbReference type="NCBIfam" id="NF008035">
    <property type="entry name" value="PRK10767.1"/>
    <property type="match status" value="1"/>
</dbReference>
<dbReference type="PANTHER" id="PTHR43096:SF48">
    <property type="entry name" value="CHAPERONE PROTEIN DNAJ"/>
    <property type="match status" value="1"/>
</dbReference>
<dbReference type="PANTHER" id="PTHR43096">
    <property type="entry name" value="DNAJ HOMOLOG 1, MITOCHONDRIAL-RELATED"/>
    <property type="match status" value="1"/>
</dbReference>
<dbReference type="Pfam" id="PF00226">
    <property type="entry name" value="DnaJ"/>
    <property type="match status" value="1"/>
</dbReference>
<dbReference type="Pfam" id="PF01556">
    <property type="entry name" value="DnaJ_C"/>
    <property type="match status" value="1"/>
</dbReference>
<dbReference type="Pfam" id="PF00684">
    <property type="entry name" value="DnaJ_CXXCXGXG"/>
    <property type="match status" value="1"/>
</dbReference>
<dbReference type="PRINTS" id="PR00625">
    <property type="entry name" value="JDOMAIN"/>
</dbReference>
<dbReference type="SMART" id="SM00271">
    <property type="entry name" value="DnaJ"/>
    <property type="match status" value="1"/>
</dbReference>
<dbReference type="SUPFAM" id="SSF46565">
    <property type="entry name" value="Chaperone J-domain"/>
    <property type="match status" value="1"/>
</dbReference>
<dbReference type="SUPFAM" id="SSF57938">
    <property type="entry name" value="DnaJ/Hsp40 cysteine-rich domain"/>
    <property type="match status" value="1"/>
</dbReference>
<dbReference type="SUPFAM" id="SSF49493">
    <property type="entry name" value="HSP40/DnaJ peptide-binding domain"/>
    <property type="match status" value="2"/>
</dbReference>
<dbReference type="PROSITE" id="PS00636">
    <property type="entry name" value="DNAJ_1"/>
    <property type="match status" value="1"/>
</dbReference>
<dbReference type="PROSITE" id="PS50076">
    <property type="entry name" value="DNAJ_2"/>
    <property type="match status" value="1"/>
</dbReference>
<dbReference type="PROSITE" id="PS51188">
    <property type="entry name" value="ZF_CR"/>
    <property type="match status" value="1"/>
</dbReference>
<accession>A1K4C4</accession>
<proteinExistence type="inferred from homology"/>
<protein>
    <recommendedName>
        <fullName evidence="1">Chaperone protein DnaJ</fullName>
    </recommendedName>
</protein>
<evidence type="ECO:0000255" key="1">
    <source>
        <dbReference type="HAMAP-Rule" id="MF_01152"/>
    </source>
</evidence>
<gene>
    <name evidence="1" type="primary">dnaJ</name>
    <name type="ordered locus">azo1062</name>
</gene>
<feature type="chain" id="PRO_1000085144" description="Chaperone protein DnaJ">
    <location>
        <begin position="1"/>
        <end position="375"/>
    </location>
</feature>
<feature type="domain" description="J" evidence="1">
    <location>
        <begin position="5"/>
        <end position="70"/>
    </location>
</feature>
<feature type="repeat" description="CXXCXGXG motif">
    <location>
        <begin position="147"/>
        <end position="154"/>
    </location>
</feature>
<feature type="repeat" description="CXXCXGXG motif">
    <location>
        <begin position="164"/>
        <end position="171"/>
    </location>
</feature>
<feature type="repeat" description="CXXCXGXG motif">
    <location>
        <begin position="186"/>
        <end position="193"/>
    </location>
</feature>
<feature type="repeat" description="CXXCXGXG motif">
    <location>
        <begin position="200"/>
        <end position="207"/>
    </location>
</feature>
<feature type="zinc finger region" description="CR-type" evidence="1">
    <location>
        <begin position="134"/>
        <end position="212"/>
    </location>
</feature>
<feature type="binding site" evidence="1">
    <location>
        <position position="147"/>
    </location>
    <ligand>
        <name>Zn(2+)</name>
        <dbReference type="ChEBI" id="CHEBI:29105"/>
        <label>1</label>
    </ligand>
</feature>
<feature type="binding site" evidence="1">
    <location>
        <position position="150"/>
    </location>
    <ligand>
        <name>Zn(2+)</name>
        <dbReference type="ChEBI" id="CHEBI:29105"/>
        <label>1</label>
    </ligand>
</feature>
<feature type="binding site" evidence="1">
    <location>
        <position position="164"/>
    </location>
    <ligand>
        <name>Zn(2+)</name>
        <dbReference type="ChEBI" id="CHEBI:29105"/>
        <label>2</label>
    </ligand>
</feature>
<feature type="binding site" evidence="1">
    <location>
        <position position="167"/>
    </location>
    <ligand>
        <name>Zn(2+)</name>
        <dbReference type="ChEBI" id="CHEBI:29105"/>
        <label>2</label>
    </ligand>
</feature>
<feature type="binding site" evidence="1">
    <location>
        <position position="186"/>
    </location>
    <ligand>
        <name>Zn(2+)</name>
        <dbReference type="ChEBI" id="CHEBI:29105"/>
        <label>2</label>
    </ligand>
</feature>
<feature type="binding site" evidence="1">
    <location>
        <position position="189"/>
    </location>
    <ligand>
        <name>Zn(2+)</name>
        <dbReference type="ChEBI" id="CHEBI:29105"/>
        <label>2</label>
    </ligand>
</feature>
<feature type="binding site" evidence="1">
    <location>
        <position position="200"/>
    </location>
    <ligand>
        <name>Zn(2+)</name>
        <dbReference type="ChEBI" id="CHEBI:29105"/>
        <label>1</label>
    </ligand>
</feature>
<feature type="binding site" evidence="1">
    <location>
        <position position="203"/>
    </location>
    <ligand>
        <name>Zn(2+)</name>
        <dbReference type="ChEBI" id="CHEBI:29105"/>
        <label>1</label>
    </ligand>
</feature>
<comment type="function">
    <text evidence="1">Participates actively in the response to hyperosmotic and heat shock by preventing the aggregation of stress-denatured proteins and by disaggregating proteins, also in an autonomous, DnaK-independent fashion. Unfolded proteins bind initially to DnaJ; upon interaction with the DnaJ-bound protein, DnaK hydrolyzes its bound ATP, resulting in the formation of a stable complex. GrpE releases ADP from DnaK; ATP binding to DnaK triggers the release of the substrate protein, thus completing the reaction cycle. Several rounds of ATP-dependent interactions between DnaJ, DnaK and GrpE are required for fully efficient folding. Also involved, together with DnaK and GrpE, in the DNA replication of plasmids through activation of initiation proteins.</text>
</comment>
<comment type="cofactor">
    <cofactor evidence="1">
        <name>Zn(2+)</name>
        <dbReference type="ChEBI" id="CHEBI:29105"/>
    </cofactor>
    <text evidence="1">Binds 2 Zn(2+) ions per monomer.</text>
</comment>
<comment type="subunit">
    <text evidence="1">Homodimer.</text>
</comment>
<comment type="subcellular location">
    <subcellularLocation>
        <location evidence="1">Cytoplasm</location>
    </subcellularLocation>
</comment>
<comment type="domain">
    <text evidence="1">The J domain is necessary and sufficient to stimulate DnaK ATPase activity. Zinc center 1 plays an important role in the autonomous, DnaK-independent chaperone activity of DnaJ. Zinc center 2 is essential for interaction with DnaK and for DnaJ activity.</text>
</comment>
<comment type="similarity">
    <text evidence="1">Belongs to the DnaJ family.</text>
</comment>
<keyword id="KW-0143">Chaperone</keyword>
<keyword id="KW-0963">Cytoplasm</keyword>
<keyword id="KW-0235">DNA replication</keyword>
<keyword id="KW-0479">Metal-binding</keyword>
<keyword id="KW-1185">Reference proteome</keyword>
<keyword id="KW-0677">Repeat</keyword>
<keyword id="KW-0346">Stress response</keyword>
<keyword id="KW-0862">Zinc</keyword>
<keyword id="KW-0863">Zinc-finger</keyword>
<sequence length="375" mass="40840">MSKRDYYEVLGVNRDAGDDEIKKAYRKLAMKYHPDRNPDSKEAEEKFKEAKEAYEVLSDAQKKGAYDRYGHAGVDPSMGGGGGGQGFEGFADAFGDIFGDLFGGRGGGGGRSNVYRGADLRYNLEISLEEAARGAEKTIRIPTVEECGTCHGSGAKPGTQPKTCPTCGGAGQVRIQQGFFSIQQTCPKCHGTGRIIPDPCGDCGGAGRVKKQKTLEVKIPAGIDEGMRLRHSGHGEPGVNGGPPGDLYVEIHIRQHPVFERDHDDLHCEMPISFATAALGGEIEIPTLEGMARIKIPAETQSGKVFRLRGKGIKNVRSHTHGDLMCHVVVETPVNLTERQKELLREFEEVSKGDAERHNPKAKSWMDKVRDFFAT</sequence>
<name>DNAJ_AZOSB</name>